<accession>C1KY97</accession>
<gene>
    <name evidence="1" type="primary">pgk</name>
    <name type="ordered locus">Lm4b_02427</name>
</gene>
<sequence length="396" mass="42075">MAKKVVTDLDLKDKKVLVRVDFNVPMKDGKITNDNRIVAALPTIEYILEQNGKAILFSHLGKVKTEEDKEGKSLRPVAARLSELLGKEVKFVPTTRGPELEKAIDELKDGEVLLFENTRFEDIDGKKESKNDPELGKYWASLGDVFVNDAFGTAHRAHASNVGIASNLESAAGFLMEKEIKFIGGVVDNPARPLVAILGGAKVSDKIGVIENLLTKADKVLVGGGMTFTFMAAQGQEIGKSLLEADKVELAKGLLEKAGNKLVLPVDAVVSKEFSNDAPFHTVSADSIPADEMGLDIGQATIDLFTKELQGAKTVVWNGPMGVFELSNFAKGTIGVCEAIANLTDATTIIGGGDSAAAAMDLGFADKFTHISTGGGASLEYLEGKELPGVASISDK</sequence>
<dbReference type="EC" id="2.7.2.3" evidence="1"/>
<dbReference type="EMBL" id="FM242711">
    <property type="protein sequence ID" value="CAS06182.1"/>
    <property type="molecule type" value="Genomic_DNA"/>
</dbReference>
<dbReference type="RefSeq" id="WP_010959052.1">
    <property type="nucleotide sequence ID" value="NC_012488.1"/>
</dbReference>
<dbReference type="SMR" id="C1KY97"/>
<dbReference type="KEGG" id="lmc:Lm4b_02427"/>
<dbReference type="HOGENOM" id="CLU_025427_0_2_9"/>
<dbReference type="UniPathway" id="UPA00109">
    <property type="reaction ID" value="UER00185"/>
</dbReference>
<dbReference type="GO" id="GO:0005829">
    <property type="term" value="C:cytosol"/>
    <property type="evidence" value="ECO:0007669"/>
    <property type="project" value="TreeGrafter"/>
</dbReference>
<dbReference type="GO" id="GO:0043531">
    <property type="term" value="F:ADP binding"/>
    <property type="evidence" value="ECO:0007669"/>
    <property type="project" value="TreeGrafter"/>
</dbReference>
<dbReference type="GO" id="GO:0005524">
    <property type="term" value="F:ATP binding"/>
    <property type="evidence" value="ECO:0007669"/>
    <property type="project" value="UniProtKB-KW"/>
</dbReference>
<dbReference type="GO" id="GO:0004618">
    <property type="term" value="F:phosphoglycerate kinase activity"/>
    <property type="evidence" value="ECO:0007669"/>
    <property type="project" value="UniProtKB-UniRule"/>
</dbReference>
<dbReference type="GO" id="GO:0006094">
    <property type="term" value="P:gluconeogenesis"/>
    <property type="evidence" value="ECO:0007669"/>
    <property type="project" value="TreeGrafter"/>
</dbReference>
<dbReference type="GO" id="GO:0006096">
    <property type="term" value="P:glycolytic process"/>
    <property type="evidence" value="ECO:0007669"/>
    <property type="project" value="UniProtKB-UniRule"/>
</dbReference>
<dbReference type="CDD" id="cd00318">
    <property type="entry name" value="Phosphoglycerate_kinase"/>
    <property type="match status" value="1"/>
</dbReference>
<dbReference type="FunFam" id="3.40.50.1260:FF:000001">
    <property type="entry name" value="Phosphoglycerate kinase"/>
    <property type="match status" value="1"/>
</dbReference>
<dbReference type="FunFam" id="3.40.50.1260:FF:000008">
    <property type="entry name" value="Phosphoglycerate kinase"/>
    <property type="match status" value="1"/>
</dbReference>
<dbReference type="Gene3D" id="3.40.50.1260">
    <property type="entry name" value="Phosphoglycerate kinase, N-terminal domain"/>
    <property type="match status" value="2"/>
</dbReference>
<dbReference type="HAMAP" id="MF_00145">
    <property type="entry name" value="Phosphoglyc_kinase"/>
    <property type="match status" value="1"/>
</dbReference>
<dbReference type="InterPro" id="IPR001576">
    <property type="entry name" value="Phosphoglycerate_kinase"/>
</dbReference>
<dbReference type="InterPro" id="IPR015911">
    <property type="entry name" value="Phosphoglycerate_kinase_CS"/>
</dbReference>
<dbReference type="InterPro" id="IPR015824">
    <property type="entry name" value="Phosphoglycerate_kinase_N"/>
</dbReference>
<dbReference type="InterPro" id="IPR036043">
    <property type="entry name" value="Phosphoglycerate_kinase_sf"/>
</dbReference>
<dbReference type="PANTHER" id="PTHR11406">
    <property type="entry name" value="PHOSPHOGLYCERATE KINASE"/>
    <property type="match status" value="1"/>
</dbReference>
<dbReference type="PANTHER" id="PTHR11406:SF23">
    <property type="entry name" value="PHOSPHOGLYCERATE KINASE 1, CHLOROPLASTIC-RELATED"/>
    <property type="match status" value="1"/>
</dbReference>
<dbReference type="Pfam" id="PF00162">
    <property type="entry name" value="PGK"/>
    <property type="match status" value="1"/>
</dbReference>
<dbReference type="PIRSF" id="PIRSF000724">
    <property type="entry name" value="Pgk"/>
    <property type="match status" value="1"/>
</dbReference>
<dbReference type="PRINTS" id="PR00477">
    <property type="entry name" value="PHGLYCKINASE"/>
</dbReference>
<dbReference type="SUPFAM" id="SSF53748">
    <property type="entry name" value="Phosphoglycerate kinase"/>
    <property type="match status" value="1"/>
</dbReference>
<dbReference type="PROSITE" id="PS00111">
    <property type="entry name" value="PGLYCERATE_KINASE"/>
    <property type="match status" value="1"/>
</dbReference>
<keyword id="KW-0067">ATP-binding</keyword>
<keyword id="KW-0963">Cytoplasm</keyword>
<keyword id="KW-0324">Glycolysis</keyword>
<keyword id="KW-0418">Kinase</keyword>
<keyword id="KW-0547">Nucleotide-binding</keyword>
<keyword id="KW-0808">Transferase</keyword>
<protein>
    <recommendedName>
        <fullName evidence="1">Phosphoglycerate kinase</fullName>
        <ecNumber evidence="1">2.7.2.3</ecNumber>
    </recommendedName>
</protein>
<organism>
    <name type="scientific">Listeria monocytogenes serotype 4b (strain CLIP80459)</name>
    <dbReference type="NCBI Taxonomy" id="568819"/>
    <lineage>
        <taxon>Bacteria</taxon>
        <taxon>Bacillati</taxon>
        <taxon>Bacillota</taxon>
        <taxon>Bacilli</taxon>
        <taxon>Bacillales</taxon>
        <taxon>Listeriaceae</taxon>
        <taxon>Listeria</taxon>
    </lineage>
</organism>
<comment type="catalytic activity">
    <reaction evidence="1">
        <text>(2R)-3-phosphoglycerate + ATP = (2R)-3-phospho-glyceroyl phosphate + ADP</text>
        <dbReference type="Rhea" id="RHEA:14801"/>
        <dbReference type="ChEBI" id="CHEBI:30616"/>
        <dbReference type="ChEBI" id="CHEBI:57604"/>
        <dbReference type="ChEBI" id="CHEBI:58272"/>
        <dbReference type="ChEBI" id="CHEBI:456216"/>
        <dbReference type="EC" id="2.7.2.3"/>
    </reaction>
</comment>
<comment type="pathway">
    <text evidence="1">Carbohydrate degradation; glycolysis; pyruvate from D-glyceraldehyde 3-phosphate: step 2/5.</text>
</comment>
<comment type="subunit">
    <text evidence="1">Monomer.</text>
</comment>
<comment type="subcellular location">
    <subcellularLocation>
        <location evidence="1">Cytoplasm</location>
    </subcellularLocation>
</comment>
<comment type="similarity">
    <text evidence="1">Belongs to the phosphoglycerate kinase family.</text>
</comment>
<proteinExistence type="inferred from homology"/>
<evidence type="ECO:0000255" key="1">
    <source>
        <dbReference type="HAMAP-Rule" id="MF_00145"/>
    </source>
</evidence>
<feature type="chain" id="PRO_1000203337" description="Phosphoglycerate kinase">
    <location>
        <begin position="1"/>
        <end position="396"/>
    </location>
</feature>
<feature type="binding site" evidence="1">
    <location>
        <begin position="21"/>
        <end position="23"/>
    </location>
    <ligand>
        <name>substrate</name>
    </ligand>
</feature>
<feature type="binding site" evidence="1">
    <location>
        <position position="36"/>
    </location>
    <ligand>
        <name>substrate</name>
    </ligand>
</feature>
<feature type="binding site" evidence="1">
    <location>
        <begin position="59"/>
        <end position="62"/>
    </location>
    <ligand>
        <name>substrate</name>
    </ligand>
</feature>
<feature type="binding site" evidence="1">
    <location>
        <position position="119"/>
    </location>
    <ligand>
        <name>substrate</name>
    </ligand>
</feature>
<feature type="binding site" evidence="1">
    <location>
        <position position="156"/>
    </location>
    <ligand>
        <name>substrate</name>
    </ligand>
</feature>
<feature type="binding site" evidence="1">
    <location>
        <position position="206"/>
    </location>
    <ligand>
        <name>ATP</name>
        <dbReference type="ChEBI" id="CHEBI:30616"/>
    </ligand>
</feature>
<feature type="binding site" evidence="1">
    <location>
        <position position="294"/>
    </location>
    <ligand>
        <name>ATP</name>
        <dbReference type="ChEBI" id="CHEBI:30616"/>
    </ligand>
</feature>
<feature type="binding site" evidence="1">
    <location>
        <position position="325"/>
    </location>
    <ligand>
        <name>ATP</name>
        <dbReference type="ChEBI" id="CHEBI:30616"/>
    </ligand>
</feature>
<feature type="binding site" evidence="1">
    <location>
        <begin position="352"/>
        <end position="355"/>
    </location>
    <ligand>
        <name>ATP</name>
        <dbReference type="ChEBI" id="CHEBI:30616"/>
    </ligand>
</feature>
<reference key="1">
    <citation type="journal article" date="2012" name="BMC Genomics">
        <title>Comparative genomics and transcriptomics of lineages I, II, and III strains of Listeria monocytogenes.</title>
        <authorList>
            <person name="Hain T."/>
            <person name="Ghai R."/>
            <person name="Billion A."/>
            <person name="Kuenne C.T."/>
            <person name="Steinweg C."/>
            <person name="Izar B."/>
            <person name="Mohamed W."/>
            <person name="Mraheil M."/>
            <person name="Domann E."/>
            <person name="Schaffrath S."/>
            <person name="Karst U."/>
            <person name="Goesmann A."/>
            <person name="Oehm S."/>
            <person name="Puhler A."/>
            <person name="Merkl R."/>
            <person name="Vorwerk S."/>
            <person name="Glaser P."/>
            <person name="Garrido P."/>
            <person name="Rusniok C."/>
            <person name="Buchrieser C."/>
            <person name="Goebel W."/>
            <person name="Chakraborty T."/>
        </authorList>
    </citation>
    <scope>NUCLEOTIDE SEQUENCE [LARGE SCALE GENOMIC DNA]</scope>
    <source>
        <strain>CLIP80459</strain>
    </source>
</reference>
<name>PGK_LISMC</name>